<accession>A0A024SNB7</accession>
<feature type="signal peptide" evidence="3">
    <location>
        <begin position="1"/>
        <end position="22"/>
    </location>
</feature>
<feature type="chain" id="PRO_5001534088" description="Endoglucanase EG-1">
    <location>
        <begin position="23"/>
        <end position="459"/>
    </location>
</feature>
<feature type="domain" description="CBM1" evidence="4">
    <location>
        <begin position="423"/>
        <end position="459"/>
    </location>
</feature>
<feature type="region of interest" description="Catalytic" evidence="1">
    <location>
        <begin position="23"/>
        <end position="397"/>
    </location>
</feature>
<feature type="region of interest" description="Disordered" evidence="5">
    <location>
        <begin position="390"/>
        <end position="425"/>
    </location>
</feature>
<feature type="region of interest" description="Linker" evidence="1">
    <location>
        <begin position="398"/>
        <end position="423"/>
    </location>
</feature>
<feature type="compositionally biased region" description="Low complexity" evidence="5">
    <location>
        <begin position="404"/>
        <end position="425"/>
    </location>
</feature>
<feature type="active site" description="Nucleophile" evidence="1">
    <location>
        <position position="218"/>
    </location>
</feature>
<feature type="active site" description="Proton donor/acceptor" evidence="1">
    <location>
        <position position="223"/>
    </location>
</feature>
<feature type="site" description="Not glycosylated" evidence="6">
    <location>
        <position position="164"/>
    </location>
</feature>
<feature type="site" description="Not glycosylated" evidence="6">
    <location>
        <position position="208"/>
    </location>
</feature>
<feature type="site" description="Not glycosylated" evidence="6">
    <location>
        <position position="281"/>
    </location>
</feature>
<feature type="modified residue" description="Pyrrolidone carboxylic acid" evidence="1">
    <location>
        <position position="23"/>
    </location>
</feature>
<feature type="glycosylation site" description="N-linked (GlcNAc) asparagine" evidence="6">
    <location>
        <position position="78"/>
    </location>
</feature>
<feature type="glycosylation site" description="N-linked (GlcNAc...) (high mannose) asparagine" evidence="6">
    <location>
        <position position="204"/>
    </location>
</feature>
<feature type="glycosylation site" description="N-linked (GlcNAc...) asparagine" evidence="6">
    <location>
        <position position="394"/>
    </location>
</feature>
<feature type="disulfide bond" evidence="1">
    <location>
        <begin position="41"/>
        <end position="47"/>
    </location>
</feature>
<feature type="disulfide bond" evidence="1">
    <location>
        <begin position="71"/>
        <end position="92"/>
    </location>
</feature>
<feature type="disulfide bond" evidence="1">
    <location>
        <begin position="82"/>
        <end position="88"/>
    </location>
</feature>
<feature type="disulfide bond" evidence="1">
    <location>
        <begin position="161"/>
        <end position="360"/>
    </location>
</feature>
<feature type="disulfide bond" evidence="1">
    <location>
        <begin position="193"/>
        <end position="216"/>
    </location>
</feature>
<feature type="disulfide bond" evidence="1">
    <location>
        <begin position="197"/>
        <end position="215"/>
    </location>
</feature>
<feature type="disulfide bond" evidence="1">
    <location>
        <begin position="236"/>
        <end position="241"/>
    </location>
</feature>
<feature type="disulfide bond" evidence="1">
    <location>
        <begin position="246"/>
        <end position="315"/>
    </location>
</feature>
<feature type="disulfide bond" evidence="1">
    <location>
        <begin position="423"/>
        <end position="439"/>
    </location>
</feature>
<feature type="disulfide bond" evidence="1">
    <location>
        <begin position="431"/>
        <end position="448"/>
    </location>
</feature>
<feature type="disulfide bond" evidence="1">
    <location>
        <begin position="442"/>
        <end position="458"/>
    </location>
</feature>
<name>GUN1_HYPJR</name>
<keyword id="KW-0119">Carbohydrate metabolism</keyword>
<keyword id="KW-0136">Cellulose degradation</keyword>
<keyword id="KW-1015">Disulfide bond</keyword>
<keyword id="KW-0325">Glycoprotein</keyword>
<keyword id="KW-0326">Glycosidase</keyword>
<keyword id="KW-0378">Hydrolase</keyword>
<keyword id="KW-0624">Polysaccharide degradation</keyword>
<keyword id="KW-0873">Pyrrolidone carboxylic acid</keyword>
<keyword id="KW-0964">Secreted</keyword>
<keyword id="KW-0732">Signal</keyword>
<gene>
    <name type="primary">egl1</name>
    <name type="ORF">M419DRAFT_5304</name>
</gene>
<comment type="function">
    <text evidence="1">Endoglucanase (EG) that cleaves the internal beta-1,4-glucosidic bonds in cellulose. The degradation of cellulose involves an interplay between different cellulolytic enzymes. Hydrolysis starts with EGs, which cut internal glycosidic linkages to reduce the polymerization degree of the substrate and creates new chain ends for exocellobiohydrolases (CBHs). The CBH release the disaccharide cellobiose from the non-reducing end of the cellulose polymer chain. Finally, beta-1,4-glucosidases hydrolyze the cellobiose and other short cello-oligosaccharides into glucose units.</text>
</comment>
<comment type="catalytic activity">
    <reaction evidence="1">
        <text>Endohydrolysis of (1-&gt;4)-beta-D-glucosidic linkages in cellulose, lichenin and cereal beta-D-glucans.</text>
        <dbReference type="EC" id="3.2.1.4"/>
    </reaction>
</comment>
<comment type="subcellular location">
    <subcellularLocation>
        <location evidence="1">Secreted</location>
    </subcellularLocation>
</comment>
<comment type="domain">
    <text evidence="2">The enzyme consists of two functional domains, a catalytic core joined to a carbohydrate-binding domain (CBM) by a serine-, threonine-, and proline-rich, highly glycosylated linker sequence.</text>
</comment>
<comment type="PTM">
    <text evidence="6">Asn-204 contains mainly a high-mannose-type glycan (Hex(7-9)GlcNAc(2)), with a small fraction (8%) bearing a single GlcNAc at this site.</text>
</comment>
<comment type="similarity">
    <text evidence="7">Belongs to the glycosyl hydrolase 7 (cellulase C) family.</text>
</comment>
<reference key="1">
    <citation type="journal article" date="2013" name="Ind. Biotechnol.">
        <title>Comparative genomics analysis of Trichoderma reesei strains.</title>
        <authorList>
            <person name="Koike H."/>
            <person name="Aerts A."/>
            <person name="LaButti K."/>
            <person name="Grigoriev I.V."/>
            <person name="Baker S.E."/>
        </authorList>
    </citation>
    <scope>NUCLEOTIDE SEQUENCE [LARGE SCALE GENOMIC DNA]</scope>
    <source>
        <strain>ATCC 56765 / BCRC 32924 / NRRL 11460 / Rut C-30</strain>
    </source>
</reference>
<reference key="2">
    <citation type="journal article" date="2002" name="Glycobiology">
        <title>Identification of glycan structure and glycosylation sites in cellobiohydrolase II and endoglucanases I and II from Trichoderma reesei.</title>
        <authorList>
            <person name="Hui J.P."/>
            <person name="White T.C."/>
            <person name="Thibault P."/>
        </authorList>
    </citation>
    <scope>GLYCOSYLATION AT ASN-78; ASN-204 AND ASN-394</scope>
    <source>
        <strain>ATCC 56765 / BCRC 32924 / NRRL 11460 / Rut C-30</strain>
    </source>
</reference>
<sequence>MAPSVTLPLTTAILAIARLVAAQQPGTSTPEVHPKLTTYKCTKSGGCVAQDTSVVLDWNYRWMHDANYNSCTVNGGVNTTLCPDEATCGKNCFIEGVDYAASGVTTSGSSLTMNQYMPSSSGGYSSVSPRLYLLDSDGEYVMLKLNGQELSFDVDLSALPCGENGSLYLSQMDENGGANQYNTAGANYGSGYCDAQCPVQTWRNGTLNTSHQGFCCNEMDILEGNSRANALTPHSCTATACDSAGCGFNPYGSGYKSYYGPGDTVDTSKTFTIITQFNTDNGSPSGNLVSITRKYQQNGVDIPSAQPGGDTISSCPSASAYGGLATMGKALSSGMVLVFSIWNDNSQYMNWLDSGNAGPCSSTEGNPSNILANNPNTHVVFSNIRWGDIGSTTNSTAPPPPPASSTTFSTTRRSSTTSSSPSCTQTHWGQCGGIGYSGCKTCTSGTTCQYSNDYYSQCL</sequence>
<evidence type="ECO:0000250" key="1">
    <source>
        <dbReference type="UniProtKB" id="P07981"/>
    </source>
</evidence>
<evidence type="ECO:0000250" key="2">
    <source>
        <dbReference type="UniProtKB" id="P62694"/>
    </source>
</evidence>
<evidence type="ECO:0000255" key="3"/>
<evidence type="ECO:0000255" key="4">
    <source>
        <dbReference type="PROSITE-ProRule" id="PRU00597"/>
    </source>
</evidence>
<evidence type="ECO:0000256" key="5">
    <source>
        <dbReference type="SAM" id="MobiDB-lite"/>
    </source>
</evidence>
<evidence type="ECO:0000269" key="6">
    <source>
    </source>
</evidence>
<evidence type="ECO:0000305" key="7"/>
<dbReference type="EC" id="3.2.1.4" evidence="1"/>
<dbReference type="EMBL" id="KI911139">
    <property type="protein sequence ID" value="ETS07075.1"/>
    <property type="molecule type" value="Genomic_DNA"/>
</dbReference>
<dbReference type="SMR" id="A0A024SNB7"/>
<dbReference type="GlyCosmos" id="A0A024SNB7">
    <property type="glycosylation" value="3 sites, No reported glycans"/>
</dbReference>
<dbReference type="iPTMnet" id="A0A024SNB7"/>
<dbReference type="KEGG" id="trr:M419DRAFT_5304"/>
<dbReference type="HOGENOM" id="CLU_020817_3_2_1"/>
<dbReference type="OrthoDB" id="17337at5129"/>
<dbReference type="Proteomes" id="UP000024376">
    <property type="component" value="Unassembled WGS sequence"/>
</dbReference>
<dbReference type="GO" id="GO:0005576">
    <property type="term" value="C:extracellular region"/>
    <property type="evidence" value="ECO:0007669"/>
    <property type="project" value="UniProtKB-SubCell"/>
</dbReference>
<dbReference type="GO" id="GO:0008810">
    <property type="term" value="F:cellulase activity"/>
    <property type="evidence" value="ECO:0007669"/>
    <property type="project" value="UniProtKB-EC"/>
</dbReference>
<dbReference type="GO" id="GO:0030248">
    <property type="term" value="F:cellulose binding"/>
    <property type="evidence" value="ECO:0007669"/>
    <property type="project" value="InterPro"/>
</dbReference>
<dbReference type="GO" id="GO:0030245">
    <property type="term" value="P:cellulose catabolic process"/>
    <property type="evidence" value="ECO:0007669"/>
    <property type="project" value="UniProtKB-KW"/>
</dbReference>
<dbReference type="CDD" id="cd07999">
    <property type="entry name" value="GH7_CBH_EG"/>
    <property type="match status" value="1"/>
</dbReference>
<dbReference type="Gene3D" id="2.70.100.10">
    <property type="entry name" value="Glycoside hydrolase, family 7, domain"/>
    <property type="match status" value="1"/>
</dbReference>
<dbReference type="InterPro" id="IPR035971">
    <property type="entry name" value="CBD_sf"/>
</dbReference>
<dbReference type="InterPro" id="IPR000254">
    <property type="entry name" value="Cellulose-bd_dom_fun"/>
</dbReference>
<dbReference type="InterPro" id="IPR013320">
    <property type="entry name" value="ConA-like_dom_sf"/>
</dbReference>
<dbReference type="InterPro" id="IPR001722">
    <property type="entry name" value="Glyco_hydro_7"/>
</dbReference>
<dbReference type="InterPro" id="IPR037019">
    <property type="entry name" value="Glyco_hydro_7_sf"/>
</dbReference>
<dbReference type="PANTHER" id="PTHR33753">
    <property type="entry name" value="1,4-BETA-D-GLUCAN CELLOBIOHYDROLASE B"/>
    <property type="match status" value="1"/>
</dbReference>
<dbReference type="PANTHER" id="PTHR33753:SF1">
    <property type="entry name" value="ENDO-BETA-1,4-GLUCANASE CELB"/>
    <property type="match status" value="1"/>
</dbReference>
<dbReference type="Pfam" id="PF00734">
    <property type="entry name" value="CBM_1"/>
    <property type="match status" value="1"/>
</dbReference>
<dbReference type="Pfam" id="PF00840">
    <property type="entry name" value="Glyco_hydro_7"/>
    <property type="match status" value="1"/>
</dbReference>
<dbReference type="PRINTS" id="PR00734">
    <property type="entry name" value="GLHYDRLASE7"/>
</dbReference>
<dbReference type="SMART" id="SM00236">
    <property type="entry name" value="fCBD"/>
    <property type="match status" value="1"/>
</dbReference>
<dbReference type="SUPFAM" id="SSF57180">
    <property type="entry name" value="Cellulose-binding domain"/>
    <property type="match status" value="1"/>
</dbReference>
<dbReference type="SUPFAM" id="SSF49899">
    <property type="entry name" value="Concanavalin A-like lectins/glucanases"/>
    <property type="match status" value="1"/>
</dbReference>
<dbReference type="PROSITE" id="PS00562">
    <property type="entry name" value="CBM1_1"/>
    <property type="match status" value="1"/>
</dbReference>
<dbReference type="PROSITE" id="PS51164">
    <property type="entry name" value="CBM1_2"/>
    <property type="match status" value="1"/>
</dbReference>
<proteinExistence type="evidence at protein level"/>
<protein>
    <recommendedName>
        <fullName>Endoglucanase EG-1</fullName>
        <ecNumber evidence="1">3.2.1.4</ecNumber>
    </recommendedName>
    <alternativeName>
        <fullName>Cellulase</fullName>
    </alternativeName>
    <alternativeName>
        <fullName>Endo-1,4-beta-glucanase</fullName>
    </alternativeName>
</protein>
<organism>
    <name type="scientific">Hypocrea jecorina (strain ATCC 56765 / BCRC 32924 / NRRL 11460 / Rut C-30)</name>
    <name type="common">Trichoderma reesei</name>
    <dbReference type="NCBI Taxonomy" id="1344414"/>
    <lineage>
        <taxon>Eukaryota</taxon>
        <taxon>Fungi</taxon>
        <taxon>Dikarya</taxon>
        <taxon>Ascomycota</taxon>
        <taxon>Pezizomycotina</taxon>
        <taxon>Sordariomycetes</taxon>
        <taxon>Hypocreomycetidae</taxon>
        <taxon>Hypocreales</taxon>
        <taxon>Hypocreaceae</taxon>
        <taxon>Trichoderma</taxon>
    </lineage>
</organism>